<protein>
    <recommendedName>
        <fullName evidence="1">6,7-dimethyl-8-ribityllumazine synthase</fullName>
        <shortName evidence="1">DMRL synthase</shortName>
        <shortName evidence="1">LS</shortName>
        <shortName evidence="1">Lumazine synthase</shortName>
        <ecNumber evidence="1">2.5.1.78</ecNumber>
    </recommendedName>
</protein>
<evidence type="ECO:0000255" key="1">
    <source>
        <dbReference type="HAMAP-Rule" id="MF_00178"/>
    </source>
</evidence>
<comment type="function">
    <text evidence="1">Catalyzes the formation of 6,7-dimethyl-8-ribityllumazine by condensation of 5-amino-6-(D-ribitylamino)uracil with 3,4-dihydroxy-2-butanone 4-phosphate. This is the penultimate step in the biosynthesis of riboflavin.</text>
</comment>
<comment type="catalytic activity">
    <reaction evidence="1">
        <text>(2S)-2-hydroxy-3-oxobutyl phosphate + 5-amino-6-(D-ribitylamino)uracil = 6,7-dimethyl-8-(1-D-ribityl)lumazine + phosphate + 2 H2O + H(+)</text>
        <dbReference type="Rhea" id="RHEA:26152"/>
        <dbReference type="ChEBI" id="CHEBI:15377"/>
        <dbReference type="ChEBI" id="CHEBI:15378"/>
        <dbReference type="ChEBI" id="CHEBI:15934"/>
        <dbReference type="ChEBI" id="CHEBI:43474"/>
        <dbReference type="ChEBI" id="CHEBI:58201"/>
        <dbReference type="ChEBI" id="CHEBI:58830"/>
        <dbReference type="EC" id="2.5.1.78"/>
    </reaction>
</comment>
<comment type="pathway">
    <text evidence="1">Cofactor biosynthesis; riboflavin biosynthesis; riboflavin from 2-hydroxy-3-oxobutyl phosphate and 5-amino-6-(D-ribitylamino)uracil: step 1/2.</text>
</comment>
<comment type="similarity">
    <text evidence="1">Belongs to the DMRL synthase family.</text>
</comment>
<keyword id="KW-0686">Riboflavin biosynthesis</keyword>
<keyword id="KW-0808">Transferase</keyword>
<proteinExistence type="inferred from homology"/>
<accession>Q53107</accession>
<feature type="chain" id="PRO_0000134797" description="6,7-dimethyl-8-ribityllumazine synthase">
    <location>
        <begin position="1"/>
        <end position="155"/>
    </location>
</feature>
<feature type="active site" description="Proton donor" evidence="1">
    <location>
        <position position="84"/>
    </location>
</feature>
<feature type="binding site" evidence="1">
    <location>
        <position position="18"/>
    </location>
    <ligand>
        <name>5-amino-6-(D-ribitylamino)uracil</name>
        <dbReference type="ChEBI" id="CHEBI:15934"/>
    </ligand>
</feature>
<feature type="binding site" evidence="1">
    <location>
        <begin position="52"/>
        <end position="54"/>
    </location>
    <ligand>
        <name>5-amino-6-(D-ribitylamino)uracil</name>
        <dbReference type="ChEBI" id="CHEBI:15934"/>
    </ligand>
</feature>
<feature type="binding site" evidence="1">
    <location>
        <begin position="76"/>
        <end position="78"/>
    </location>
    <ligand>
        <name>5-amino-6-(D-ribitylamino)uracil</name>
        <dbReference type="ChEBI" id="CHEBI:15934"/>
    </ligand>
</feature>
<feature type="binding site" evidence="1">
    <location>
        <position position="109"/>
    </location>
    <ligand>
        <name>5-amino-6-(D-ribitylamino)uracil</name>
        <dbReference type="ChEBI" id="CHEBI:15934"/>
    </ligand>
</feature>
<feature type="binding site" evidence="1">
    <location>
        <position position="123"/>
    </location>
    <ligand>
        <name>(2S)-2-hydroxy-3-oxobutyl phosphate</name>
        <dbReference type="ChEBI" id="CHEBI:58830"/>
    </ligand>
</feature>
<sequence length="155" mass="17198">MVMSEIQGQRIAFIQATWHRNIVDRARDGFTDAIVELGYPKDTVDFFEVPGAFEIPLHARRLAKTGRYQAIVAAGLVVDGGIYRHDFVATAVIDGLMRVQLDTDVPVFSVVLTPHHFHEHAEHVDYFSTHFVKKGAEAARAVDATVKSLKALPTS</sequence>
<reference key="1">
    <citation type="journal article" date="1996" name="Curr. Microbiol.">
        <title>Identification of a Rhodococcus gene cluster encoding a homolog of the 17-kDa antigen of Brucella and a putative regulatory protein of the AsnC-Lrp family.</title>
        <authorList>
            <person name="de Mot R."/>
            <person name="Nagy I."/>
            <person name="Schoofs G."/>
            <person name="Vanderleyden J."/>
        </authorList>
    </citation>
    <scope>NUCLEOTIDE SEQUENCE [GENOMIC DNA]</scope>
    <source>
        <strain>NI86/21</strain>
    </source>
</reference>
<gene>
    <name evidence="1" type="primary">ribH</name>
</gene>
<dbReference type="EC" id="2.5.1.78" evidence="1"/>
<dbReference type="EMBL" id="U42216">
    <property type="protein sequence ID" value="AAC45746.1"/>
    <property type="molecule type" value="Genomic_DNA"/>
</dbReference>
<dbReference type="SMR" id="Q53107"/>
<dbReference type="STRING" id="1833.XU06_18815"/>
<dbReference type="BRENDA" id="2.5.1.78">
    <property type="organism ID" value="5389"/>
</dbReference>
<dbReference type="UniPathway" id="UPA00275">
    <property type="reaction ID" value="UER00404"/>
</dbReference>
<dbReference type="GO" id="GO:0005829">
    <property type="term" value="C:cytosol"/>
    <property type="evidence" value="ECO:0007669"/>
    <property type="project" value="TreeGrafter"/>
</dbReference>
<dbReference type="GO" id="GO:0009349">
    <property type="term" value="C:riboflavin synthase complex"/>
    <property type="evidence" value="ECO:0007669"/>
    <property type="project" value="InterPro"/>
</dbReference>
<dbReference type="GO" id="GO:0000906">
    <property type="term" value="F:6,7-dimethyl-8-ribityllumazine synthase activity"/>
    <property type="evidence" value="ECO:0007669"/>
    <property type="project" value="UniProtKB-UniRule"/>
</dbReference>
<dbReference type="GO" id="GO:0009231">
    <property type="term" value="P:riboflavin biosynthetic process"/>
    <property type="evidence" value="ECO:0007669"/>
    <property type="project" value="UniProtKB-UniRule"/>
</dbReference>
<dbReference type="CDD" id="cd09208">
    <property type="entry name" value="Lumazine_synthase-II"/>
    <property type="match status" value="1"/>
</dbReference>
<dbReference type="Gene3D" id="3.40.50.960">
    <property type="entry name" value="Lumazine/riboflavin synthase"/>
    <property type="match status" value="1"/>
</dbReference>
<dbReference type="HAMAP" id="MF_00178">
    <property type="entry name" value="Lumazine_synth"/>
    <property type="match status" value="1"/>
</dbReference>
<dbReference type="InterPro" id="IPR034964">
    <property type="entry name" value="LS"/>
</dbReference>
<dbReference type="InterPro" id="IPR002180">
    <property type="entry name" value="LS/RS"/>
</dbReference>
<dbReference type="InterPro" id="IPR036467">
    <property type="entry name" value="LS/RS_sf"/>
</dbReference>
<dbReference type="NCBIfam" id="TIGR00114">
    <property type="entry name" value="lumazine-synth"/>
    <property type="match status" value="1"/>
</dbReference>
<dbReference type="NCBIfam" id="NF009084">
    <property type="entry name" value="PRK12419.1"/>
    <property type="match status" value="1"/>
</dbReference>
<dbReference type="PANTHER" id="PTHR21058:SF0">
    <property type="entry name" value="6,7-DIMETHYL-8-RIBITYLLUMAZINE SYNTHASE"/>
    <property type="match status" value="1"/>
</dbReference>
<dbReference type="PANTHER" id="PTHR21058">
    <property type="entry name" value="6,7-DIMETHYL-8-RIBITYLLUMAZINE SYNTHASE DMRL SYNTHASE LUMAZINE SYNTHASE"/>
    <property type="match status" value="1"/>
</dbReference>
<dbReference type="Pfam" id="PF00885">
    <property type="entry name" value="DMRL_synthase"/>
    <property type="match status" value="1"/>
</dbReference>
<dbReference type="SUPFAM" id="SSF52121">
    <property type="entry name" value="Lumazine synthase"/>
    <property type="match status" value="1"/>
</dbReference>
<name>RISB_RHOER</name>
<organism>
    <name type="scientific">Rhodococcus erythropolis</name>
    <name type="common">Arthrobacter picolinophilus</name>
    <dbReference type="NCBI Taxonomy" id="1833"/>
    <lineage>
        <taxon>Bacteria</taxon>
        <taxon>Bacillati</taxon>
        <taxon>Actinomycetota</taxon>
        <taxon>Actinomycetes</taxon>
        <taxon>Mycobacteriales</taxon>
        <taxon>Nocardiaceae</taxon>
        <taxon>Rhodococcus</taxon>
        <taxon>Rhodococcus erythropolis group</taxon>
    </lineage>
</organism>